<reference key="1">
    <citation type="journal article" date="2003" name="Nucleic Acids Res.">
        <title>The complete genome sequence and analysis of Corynebacterium diphtheriae NCTC13129.</title>
        <authorList>
            <person name="Cerdeno-Tarraga A.-M."/>
            <person name="Efstratiou A."/>
            <person name="Dover L.G."/>
            <person name="Holden M.T.G."/>
            <person name="Pallen M.J."/>
            <person name="Bentley S.D."/>
            <person name="Besra G.S."/>
            <person name="Churcher C.M."/>
            <person name="James K.D."/>
            <person name="De Zoysa A."/>
            <person name="Chillingworth T."/>
            <person name="Cronin A."/>
            <person name="Dowd L."/>
            <person name="Feltwell T."/>
            <person name="Hamlin N."/>
            <person name="Holroyd S."/>
            <person name="Jagels K."/>
            <person name="Moule S."/>
            <person name="Quail M.A."/>
            <person name="Rabbinowitsch E."/>
            <person name="Rutherford K.M."/>
            <person name="Thomson N.R."/>
            <person name="Unwin L."/>
            <person name="Whitehead S."/>
            <person name="Barrell B.G."/>
            <person name="Parkhill J."/>
        </authorList>
    </citation>
    <scope>NUCLEOTIDE SEQUENCE [LARGE SCALE GENOMIC DNA]</scope>
    <source>
        <strain>ATCC 700971 / NCTC 13129 / Biotype gravis</strain>
    </source>
</reference>
<name>DAPB_CORDI</name>
<sequence length="248" mass="26156">MAIKVGVLGAQGRVGQAIVAGVTAAYDLELVAEVDRGDSLDVLVQSGAEVIVDFTTPDSVMDNLEFCISHGIHCVVGTTGFTPERLEIVKKWAEEKGNTGVLIAPNFAISAVLTMAFARQAARFFDSAEVVECHHPNKLDAPSGTAIHTAEGIAQARREAGMPTQPDATEQSLDGARGADVGGVKVHAVRMTGMVAHEEVIFGGPGQSLTIRQDSYDRTSFVPGVLVGVRNVAQHLGLTVGLEHYLDI</sequence>
<dbReference type="EC" id="1.17.1.8" evidence="1"/>
<dbReference type="EMBL" id="BX248358">
    <property type="protein sequence ID" value="CAE49994.1"/>
    <property type="molecule type" value="Genomic_DNA"/>
</dbReference>
<dbReference type="RefSeq" id="WP_010935085.1">
    <property type="nucleotide sequence ID" value="NC_002935.2"/>
</dbReference>
<dbReference type="SMR" id="Q6NGP2"/>
<dbReference type="STRING" id="257309.DIP1466"/>
<dbReference type="KEGG" id="cdi:DIP1466"/>
<dbReference type="HOGENOM" id="CLU_047479_0_1_11"/>
<dbReference type="UniPathway" id="UPA00034">
    <property type="reaction ID" value="UER00018"/>
</dbReference>
<dbReference type="Proteomes" id="UP000002198">
    <property type="component" value="Chromosome"/>
</dbReference>
<dbReference type="GO" id="GO:0005829">
    <property type="term" value="C:cytosol"/>
    <property type="evidence" value="ECO:0007669"/>
    <property type="project" value="TreeGrafter"/>
</dbReference>
<dbReference type="GO" id="GO:0008839">
    <property type="term" value="F:4-hydroxy-tetrahydrodipicolinate reductase"/>
    <property type="evidence" value="ECO:0007669"/>
    <property type="project" value="UniProtKB-EC"/>
</dbReference>
<dbReference type="GO" id="GO:0051287">
    <property type="term" value="F:NAD binding"/>
    <property type="evidence" value="ECO:0007669"/>
    <property type="project" value="UniProtKB-UniRule"/>
</dbReference>
<dbReference type="GO" id="GO:0050661">
    <property type="term" value="F:NADP binding"/>
    <property type="evidence" value="ECO:0007669"/>
    <property type="project" value="UniProtKB-UniRule"/>
</dbReference>
<dbReference type="GO" id="GO:0016726">
    <property type="term" value="F:oxidoreductase activity, acting on CH or CH2 groups, NAD or NADP as acceptor"/>
    <property type="evidence" value="ECO:0007669"/>
    <property type="project" value="UniProtKB-UniRule"/>
</dbReference>
<dbReference type="GO" id="GO:0019877">
    <property type="term" value="P:diaminopimelate biosynthetic process"/>
    <property type="evidence" value="ECO:0007669"/>
    <property type="project" value="UniProtKB-UniRule"/>
</dbReference>
<dbReference type="GO" id="GO:0009089">
    <property type="term" value="P:lysine biosynthetic process via diaminopimelate"/>
    <property type="evidence" value="ECO:0007669"/>
    <property type="project" value="UniProtKB-UniRule"/>
</dbReference>
<dbReference type="CDD" id="cd02274">
    <property type="entry name" value="DHDPR_N"/>
    <property type="match status" value="1"/>
</dbReference>
<dbReference type="FunFam" id="3.30.360.10:FF:000009">
    <property type="entry name" value="4-hydroxy-tetrahydrodipicolinate reductase"/>
    <property type="match status" value="1"/>
</dbReference>
<dbReference type="Gene3D" id="3.30.360.10">
    <property type="entry name" value="Dihydrodipicolinate Reductase, domain 2"/>
    <property type="match status" value="1"/>
</dbReference>
<dbReference type="Gene3D" id="3.40.50.720">
    <property type="entry name" value="NAD(P)-binding Rossmann-like Domain"/>
    <property type="match status" value="1"/>
</dbReference>
<dbReference type="HAMAP" id="MF_00102">
    <property type="entry name" value="DapB"/>
    <property type="match status" value="1"/>
</dbReference>
<dbReference type="InterPro" id="IPR022663">
    <property type="entry name" value="DapB_C"/>
</dbReference>
<dbReference type="InterPro" id="IPR000846">
    <property type="entry name" value="DapB_N"/>
</dbReference>
<dbReference type="InterPro" id="IPR022664">
    <property type="entry name" value="DapB_N_CS"/>
</dbReference>
<dbReference type="InterPro" id="IPR023940">
    <property type="entry name" value="DHDPR_bac"/>
</dbReference>
<dbReference type="InterPro" id="IPR036291">
    <property type="entry name" value="NAD(P)-bd_dom_sf"/>
</dbReference>
<dbReference type="NCBIfam" id="TIGR00036">
    <property type="entry name" value="dapB"/>
    <property type="match status" value="1"/>
</dbReference>
<dbReference type="PANTHER" id="PTHR20836:SF0">
    <property type="entry name" value="4-HYDROXY-TETRAHYDRODIPICOLINATE REDUCTASE 1, CHLOROPLASTIC-RELATED"/>
    <property type="match status" value="1"/>
</dbReference>
<dbReference type="PANTHER" id="PTHR20836">
    <property type="entry name" value="DIHYDRODIPICOLINATE REDUCTASE"/>
    <property type="match status" value="1"/>
</dbReference>
<dbReference type="Pfam" id="PF05173">
    <property type="entry name" value="DapB_C"/>
    <property type="match status" value="1"/>
</dbReference>
<dbReference type="Pfam" id="PF01113">
    <property type="entry name" value="DapB_N"/>
    <property type="match status" value="1"/>
</dbReference>
<dbReference type="PIRSF" id="PIRSF000161">
    <property type="entry name" value="DHPR"/>
    <property type="match status" value="1"/>
</dbReference>
<dbReference type="SUPFAM" id="SSF55347">
    <property type="entry name" value="Glyceraldehyde-3-phosphate dehydrogenase-like, C-terminal domain"/>
    <property type="match status" value="1"/>
</dbReference>
<dbReference type="SUPFAM" id="SSF51735">
    <property type="entry name" value="NAD(P)-binding Rossmann-fold domains"/>
    <property type="match status" value="1"/>
</dbReference>
<dbReference type="PROSITE" id="PS01298">
    <property type="entry name" value="DAPB"/>
    <property type="match status" value="1"/>
</dbReference>
<accession>Q6NGP2</accession>
<comment type="function">
    <text evidence="1">Catalyzes the conversion of 4-hydroxy-tetrahydrodipicolinate (HTPA) to tetrahydrodipicolinate.</text>
</comment>
<comment type="catalytic activity">
    <reaction evidence="1">
        <text>(S)-2,3,4,5-tetrahydrodipicolinate + NAD(+) + H2O = (2S,4S)-4-hydroxy-2,3,4,5-tetrahydrodipicolinate + NADH + H(+)</text>
        <dbReference type="Rhea" id="RHEA:35323"/>
        <dbReference type="ChEBI" id="CHEBI:15377"/>
        <dbReference type="ChEBI" id="CHEBI:15378"/>
        <dbReference type="ChEBI" id="CHEBI:16845"/>
        <dbReference type="ChEBI" id="CHEBI:57540"/>
        <dbReference type="ChEBI" id="CHEBI:57945"/>
        <dbReference type="ChEBI" id="CHEBI:67139"/>
        <dbReference type="EC" id="1.17.1.8"/>
    </reaction>
</comment>
<comment type="catalytic activity">
    <reaction evidence="1">
        <text>(S)-2,3,4,5-tetrahydrodipicolinate + NADP(+) + H2O = (2S,4S)-4-hydroxy-2,3,4,5-tetrahydrodipicolinate + NADPH + H(+)</text>
        <dbReference type="Rhea" id="RHEA:35331"/>
        <dbReference type="ChEBI" id="CHEBI:15377"/>
        <dbReference type="ChEBI" id="CHEBI:15378"/>
        <dbReference type="ChEBI" id="CHEBI:16845"/>
        <dbReference type="ChEBI" id="CHEBI:57783"/>
        <dbReference type="ChEBI" id="CHEBI:58349"/>
        <dbReference type="ChEBI" id="CHEBI:67139"/>
        <dbReference type="EC" id="1.17.1.8"/>
    </reaction>
</comment>
<comment type="pathway">
    <text evidence="1">Amino-acid biosynthesis; L-lysine biosynthesis via DAP pathway; (S)-tetrahydrodipicolinate from L-aspartate: step 4/4.</text>
</comment>
<comment type="subcellular location">
    <subcellularLocation>
        <location evidence="1">Cytoplasm</location>
    </subcellularLocation>
</comment>
<comment type="similarity">
    <text evidence="1">Belongs to the DapB family.</text>
</comment>
<comment type="caution">
    <text evidence="3">Was originally thought to be a dihydrodipicolinate reductase (DHDPR), catalyzing the conversion of dihydrodipicolinate to tetrahydrodipicolinate. However, it was shown in E.coli that the substrate of the enzymatic reaction is not dihydrodipicolinate (DHDP) but in fact (2S,4S)-4-hydroxy-2,3,4,5-tetrahydrodipicolinic acid (HTPA), the product released by the DapA-catalyzed reaction.</text>
</comment>
<proteinExistence type="inferred from homology"/>
<protein>
    <recommendedName>
        <fullName evidence="1">4-hydroxy-tetrahydrodipicolinate reductase</fullName>
        <shortName evidence="1">HTPA reductase</shortName>
        <ecNumber evidence="1">1.17.1.8</ecNumber>
    </recommendedName>
</protein>
<gene>
    <name evidence="1" type="primary">dapB</name>
    <name type="ordered locus">DIP1466</name>
</gene>
<feature type="chain" id="PRO_0000228340" description="4-hydroxy-tetrahydrodipicolinate reductase">
    <location>
        <begin position="1"/>
        <end position="248"/>
    </location>
</feature>
<feature type="region of interest" description="Disordered" evidence="2">
    <location>
        <begin position="157"/>
        <end position="176"/>
    </location>
</feature>
<feature type="active site" description="Proton donor/acceptor" evidence="1">
    <location>
        <position position="134"/>
    </location>
</feature>
<feature type="active site" description="Proton donor" evidence="1">
    <location>
        <position position="138"/>
    </location>
</feature>
<feature type="binding site" evidence="1">
    <location>
        <begin position="9"/>
        <end position="14"/>
    </location>
    <ligand>
        <name>NAD(+)</name>
        <dbReference type="ChEBI" id="CHEBI:57540"/>
    </ligand>
</feature>
<feature type="binding site" evidence="1">
    <location>
        <begin position="77"/>
        <end position="79"/>
    </location>
    <ligand>
        <name>NAD(+)</name>
        <dbReference type="ChEBI" id="CHEBI:57540"/>
    </ligand>
</feature>
<feature type="binding site" evidence="1">
    <location>
        <begin position="104"/>
        <end position="107"/>
    </location>
    <ligand>
        <name>NAD(+)</name>
        <dbReference type="ChEBI" id="CHEBI:57540"/>
    </ligand>
</feature>
<feature type="binding site" evidence="1">
    <location>
        <position position="135"/>
    </location>
    <ligand>
        <name>(S)-2,3,4,5-tetrahydrodipicolinate</name>
        <dbReference type="ChEBI" id="CHEBI:16845"/>
    </ligand>
</feature>
<feature type="binding site" evidence="1">
    <location>
        <begin position="144"/>
        <end position="145"/>
    </location>
    <ligand>
        <name>(S)-2,3,4,5-tetrahydrodipicolinate</name>
        <dbReference type="ChEBI" id="CHEBI:16845"/>
    </ligand>
</feature>
<keyword id="KW-0028">Amino-acid biosynthesis</keyword>
<keyword id="KW-0963">Cytoplasm</keyword>
<keyword id="KW-0220">Diaminopimelate biosynthesis</keyword>
<keyword id="KW-0457">Lysine biosynthesis</keyword>
<keyword id="KW-0520">NAD</keyword>
<keyword id="KW-0521">NADP</keyword>
<keyword id="KW-0560">Oxidoreductase</keyword>
<keyword id="KW-1185">Reference proteome</keyword>
<evidence type="ECO:0000255" key="1">
    <source>
        <dbReference type="HAMAP-Rule" id="MF_00102"/>
    </source>
</evidence>
<evidence type="ECO:0000256" key="2">
    <source>
        <dbReference type="SAM" id="MobiDB-lite"/>
    </source>
</evidence>
<evidence type="ECO:0000305" key="3"/>
<organism>
    <name type="scientific">Corynebacterium diphtheriae (strain ATCC 700971 / NCTC 13129 / Biotype gravis)</name>
    <dbReference type="NCBI Taxonomy" id="257309"/>
    <lineage>
        <taxon>Bacteria</taxon>
        <taxon>Bacillati</taxon>
        <taxon>Actinomycetota</taxon>
        <taxon>Actinomycetes</taxon>
        <taxon>Mycobacteriales</taxon>
        <taxon>Corynebacteriaceae</taxon>
        <taxon>Corynebacterium</taxon>
    </lineage>
</organism>